<evidence type="ECO:0000255" key="1">
    <source>
        <dbReference type="HAMAP-Rule" id="MF_01824"/>
    </source>
</evidence>
<accession>C1CLG7</accession>
<sequence>MTENRYELNKNLAQMLKGGVIMDVQNPEQARIAEAAGAAAVMALERIPADIRAAGGVSRMSDPKMIKEIQEAVSIPVMAKVRIGHFVEAQILEAIEIDYIDESEVLSPADDRFHVDKKEFQVPFVCGAKDLGEALRRIAEGASMIRTKGEPGTGDIVQAVRHMRMMNQEIRRIQNLREDELYVAAKDLQVPVELVQYVHEHGKLPVVNFAAGGVATPADAALMMQLGAEGVFVGSGIFKSGDPVKRASAIVKAVTNFRNPQILAQISEDLGEAMVGINENEIQILMAERGK</sequence>
<proteinExistence type="inferred from homology"/>
<comment type="function">
    <text evidence="1">Catalyzes the formation of pyridoxal 5'-phosphate from ribose 5-phosphate (RBP), glyceraldehyde 3-phosphate (G3P) and ammonia. The ammonia is provided by the PdxT subunit. Can also use ribulose 5-phosphate and dihydroxyacetone phosphate as substrates, resulting from enzyme-catalyzed isomerization of RBP and G3P, respectively.</text>
</comment>
<comment type="catalytic activity">
    <reaction evidence="1">
        <text>aldehydo-D-ribose 5-phosphate + D-glyceraldehyde 3-phosphate + L-glutamine = pyridoxal 5'-phosphate + L-glutamate + phosphate + 3 H2O + H(+)</text>
        <dbReference type="Rhea" id="RHEA:31507"/>
        <dbReference type="ChEBI" id="CHEBI:15377"/>
        <dbReference type="ChEBI" id="CHEBI:15378"/>
        <dbReference type="ChEBI" id="CHEBI:29985"/>
        <dbReference type="ChEBI" id="CHEBI:43474"/>
        <dbReference type="ChEBI" id="CHEBI:58273"/>
        <dbReference type="ChEBI" id="CHEBI:58359"/>
        <dbReference type="ChEBI" id="CHEBI:59776"/>
        <dbReference type="ChEBI" id="CHEBI:597326"/>
        <dbReference type="EC" id="4.3.3.6"/>
    </reaction>
</comment>
<comment type="pathway">
    <text evidence="1">Cofactor biosynthesis; pyridoxal 5'-phosphate biosynthesis.</text>
</comment>
<comment type="subunit">
    <text evidence="1">In the presence of PdxT, forms a dodecamer of heterodimers.</text>
</comment>
<comment type="similarity">
    <text evidence="1">Belongs to the PdxS/SNZ family.</text>
</comment>
<reference key="1">
    <citation type="journal article" date="2010" name="Genome Biol.">
        <title>Structure and dynamics of the pan-genome of Streptococcus pneumoniae and closely related species.</title>
        <authorList>
            <person name="Donati C."/>
            <person name="Hiller N.L."/>
            <person name="Tettelin H."/>
            <person name="Muzzi A."/>
            <person name="Croucher N.J."/>
            <person name="Angiuoli S.V."/>
            <person name="Oggioni M."/>
            <person name="Dunning Hotopp J.C."/>
            <person name="Hu F.Z."/>
            <person name="Riley D.R."/>
            <person name="Covacci A."/>
            <person name="Mitchell T.J."/>
            <person name="Bentley S.D."/>
            <person name="Kilian M."/>
            <person name="Ehrlich G.D."/>
            <person name="Rappuoli R."/>
            <person name="Moxon E.R."/>
            <person name="Masignani V."/>
        </authorList>
    </citation>
    <scope>NUCLEOTIDE SEQUENCE [LARGE SCALE GENOMIC DNA]</scope>
    <source>
        <strain>P1031</strain>
    </source>
</reference>
<feature type="chain" id="PRO_1000188245" description="Pyridoxal 5'-phosphate synthase subunit PdxS">
    <location>
        <begin position="1"/>
        <end position="291"/>
    </location>
</feature>
<feature type="active site" description="Schiff-base intermediate with D-ribose 5-phosphate" evidence="1">
    <location>
        <position position="80"/>
    </location>
</feature>
<feature type="binding site" evidence="1">
    <location>
        <position position="23"/>
    </location>
    <ligand>
        <name>D-ribose 5-phosphate</name>
        <dbReference type="ChEBI" id="CHEBI:78346"/>
    </ligand>
</feature>
<feature type="binding site" evidence="1">
    <location>
        <position position="152"/>
    </location>
    <ligand>
        <name>D-ribose 5-phosphate</name>
        <dbReference type="ChEBI" id="CHEBI:78346"/>
    </ligand>
</feature>
<feature type="binding site" evidence="1">
    <location>
        <position position="164"/>
    </location>
    <ligand>
        <name>D-glyceraldehyde 3-phosphate</name>
        <dbReference type="ChEBI" id="CHEBI:59776"/>
    </ligand>
</feature>
<feature type="binding site" evidence="1">
    <location>
        <position position="213"/>
    </location>
    <ligand>
        <name>D-ribose 5-phosphate</name>
        <dbReference type="ChEBI" id="CHEBI:78346"/>
    </ligand>
</feature>
<feature type="binding site" evidence="1">
    <location>
        <begin position="234"/>
        <end position="235"/>
    </location>
    <ligand>
        <name>D-ribose 5-phosphate</name>
        <dbReference type="ChEBI" id="CHEBI:78346"/>
    </ligand>
</feature>
<protein>
    <recommendedName>
        <fullName evidence="1">Pyridoxal 5'-phosphate synthase subunit PdxS</fullName>
        <shortName evidence="1">PLP synthase subunit PdxS</shortName>
        <ecNumber evidence="1">4.3.3.6</ecNumber>
    </recommendedName>
    <alternativeName>
        <fullName evidence="1">Pdx1</fullName>
    </alternativeName>
</protein>
<organism>
    <name type="scientific">Streptococcus pneumoniae (strain P1031)</name>
    <dbReference type="NCBI Taxonomy" id="488223"/>
    <lineage>
        <taxon>Bacteria</taxon>
        <taxon>Bacillati</taxon>
        <taxon>Bacillota</taxon>
        <taxon>Bacilli</taxon>
        <taxon>Lactobacillales</taxon>
        <taxon>Streptococcaceae</taxon>
        <taxon>Streptococcus</taxon>
    </lineage>
</organism>
<gene>
    <name evidence="1" type="primary">pdxS</name>
    <name type="ordered locus">SPP_1488</name>
</gene>
<dbReference type="EC" id="4.3.3.6" evidence="1"/>
<dbReference type="EMBL" id="CP000920">
    <property type="protein sequence ID" value="ACO20703.1"/>
    <property type="molecule type" value="Genomic_DNA"/>
</dbReference>
<dbReference type="RefSeq" id="WP_000138517.1">
    <property type="nucleotide sequence ID" value="NC_012467.1"/>
</dbReference>
<dbReference type="SMR" id="C1CLG7"/>
<dbReference type="GeneID" id="45653282"/>
<dbReference type="KEGG" id="spp:SPP_1488"/>
<dbReference type="HOGENOM" id="CLU_055352_1_0_9"/>
<dbReference type="UniPathway" id="UPA00245"/>
<dbReference type="GO" id="GO:0036381">
    <property type="term" value="F:pyridoxal 5'-phosphate synthase (glutamine hydrolysing) activity"/>
    <property type="evidence" value="ECO:0007669"/>
    <property type="project" value="UniProtKB-UniRule"/>
</dbReference>
<dbReference type="GO" id="GO:0006520">
    <property type="term" value="P:amino acid metabolic process"/>
    <property type="evidence" value="ECO:0007669"/>
    <property type="project" value="TreeGrafter"/>
</dbReference>
<dbReference type="GO" id="GO:0042823">
    <property type="term" value="P:pyridoxal phosphate biosynthetic process"/>
    <property type="evidence" value="ECO:0007669"/>
    <property type="project" value="UniProtKB-UniRule"/>
</dbReference>
<dbReference type="GO" id="GO:0008615">
    <property type="term" value="P:pyridoxine biosynthetic process"/>
    <property type="evidence" value="ECO:0007669"/>
    <property type="project" value="TreeGrafter"/>
</dbReference>
<dbReference type="CDD" id="cd04727">
    <property type="entry name" value="pdxS"/>
    <property type="match status" value="1"/>
</dbReference>
<dbReference type="FunFam" id="3.20.20.70:FF:000001">
    <property type="entry name" value="Pyridoxine biosynthesis protein PDX1"/>
    <property type="match status" value="1"/>
</dbReference>
<dbReference type="Gene3D" id="3.20.20.70">
    <property type="entry name" value="Aldolase class I"/>
    <property type="match status" value="1"/>
</dbReference>
<dbReference type="HAMAP" id="MF_01824">
    <property type="entry name" value="PdxS"/>
    <property type="match status" value="1"/>
</dbReference>
<dbReference type="InterPro" id="IPR013785">
    <property type="entry name" value="Aldolase_TIM"/>
</dbReference>
<dbReference type="InterPro" id="IPR001852">
    <property type="entry name" value="PdxS/SNZ"/>
</dbReference>
<dbReference type="InterPro" id="IPR033755">
    <property type="entry name" value="PdxS/SNZ_N"/>
</dbReference>
<dbReference type="InterPro" id="IPR011060">
    <property type="entry name" value="RibuloseP-bd_barrel"/>
</dbReference>
<dbReference type="NCBIfam" id="NF003215">
    <property type="entry name" value="PRK04180.1"/>
    <property type="match status" value="1"/>
</dbReference>
<dbReference type="NCBIfam" id="TIGR00343">
    <property type="entry name" value="pyridoxal 5'-phosphate synthase lyase subunit PdxS"/>
    <property type="match status" value="1"/>
</dbReference>
<dbReference type="PANTHER" id="PTHR31829">
    <property type="entry name" value="PYRIDOXAL 5'-PHOSPHATE SYNTHASE SUBUNIT SNZ1-RELATED"/>
    <property type="match status" value="1"/>
</dbReference>
<dbReference type="PANTHER" id="PTHR31829:SF0">
    <property type="entry name" value="PYRIDOXAL 5'-PHOSPHATE SYNTHASE SUBUNIT SNZ1-RELATED"/>
    <property type="match status" value="1"/>
</dbReference>
<dbReference type="Pfam" id="PF01680">
    <property type="entry name" value="SOR_SNZ"/>
    <property type="match status" value="1"/>
</dbReference>
<dbReference type="PIRSF" id="PIRSF029271">
    <property type="entry name" value="Pdx1"/>
    <property type="match status" value="1"/>
</dbReference>
<dbReference type="SUPFAM" id="SSF51366">
    <property type="entry name" value="Ribulose-phoshate binding barrel"/>
    <property type="match status" value="1"/>
</dbReference>
<dbReference type="PROSITE" id="PS01235">
    <property type="entry name" value="PDXS_SNZ_1"/>
    <property type="match status" value="1"/>
</dbReference>
<dbReference type="PROSITE" id="PS51129">
    <property type="entry name" value="PDXS_SNZ_2"/>
    <property type="match status" value="1"/>
</dbReference>
<keyword id="KW-0456">Lyase</keyword>
<keyword id="KW-0663">Pyridoxal phosphate</keyword>
<keyword id="KW-0704">Schiff base</keyword>
<name>PDXS_STRZP</name>